<comment type="function">
    <text evidence="2 8">May be responsible for potassium buffering action of glial cells in the brain (PubMed:7608203). Inward rectifier potassium channels are characterized by a greater tendency to allow potassium to flow into the cell rather than out of it. Their voltage dependence is regulated by the concentration of extracellular potassium; as external potassium is raised, the voltage range of the channel opening shifts to more positive voltages. The inward rectification is mainly due to the blockage of outward current by internal magnesium. Can be blocked by extracellular barium and cesium (PubMed:7608203). In the kidney, together with KCNJ16, mediates basolateral K(+) recycling in distal tubules; this process is critical for Na(+) reabsorption at the tubules (By similarity).</text>
</comment>
<comment type="catalytic activity">
    <reaction evidence="6 8">
        <text>K(+)(in) = K(+)(out)</text>
        <dbReference type="Rhea" id="RHEA:29463"/>
        <dbReference type="ChEBI" id="CHEBI:29103"/>
    </reaction>
</comment>
<comment type="activity regulation">
    <text evidence="5 6 8">Channel activity is strongly regulated by variations of cytosolic pH; channels are activated by alkaline and inhibited by acidic pH values (PubMed:20807765). Activated by phosphatidylinositol 4,5 biphosphate (PtdIns(4,5)P2) (PubMed:18690035). Inhibited by Ba(2+) and Cs(+) (PubMed:7608203).</text>
</comment>
<comment type="subunit">
    <text evidence="2 3 7">Homotetramer (PubMed:38355723). In kidney cells, it forms heteromeric channels with Kir5.1/KCNJ16; this interaction is required for KCNJ16 localization to the basolateral membrane. Interacts with MAGI1, alone and possibly as a heteromer with KCNJ16; this interaction may facilitate KCNJ10/KCNJ16 potassium channel expression at the basolateral membrane in kidney cells (By similarity). Interacts with PATJ (By similarity).</text>
</comment>
<comment type="subcellular location">
    <subcellularLocation>
        <location evidence="2">Membrane</location>
        <topology evidence="2">Multi-pass membrane protein</topology>
    </subcellularLocation>
    <subcellularLocation>
        <location evidence="2">Basolateral cell membrane</location>
    </subcellularLocation>
    <text evidence="2">In kidney distal convoluted tubules, located in the basolateral membrane where it colocalizes with KCNJ16.</text>
</comment>
<comment type="tissue specificity">
    <text evidence="8 9">Predominantly expressed in the brain, including in glial cells of the cerebellum and forebrain. Expressed at lower levels in the kidney, and other peripheral tissues.</text>
</comment>
<comment type="similarity">
    <text evidence="11">Belongs to the inward rectifier-type potassium channel (TC 1.A.2.1) family. KCNJ10 subfamily.</text>
</comment>
<reference key="1">
    <citation type="journal article" date="1995" name="J. Biol. Chem.">
        <title>A novel ATP-dependent inward rectifier potassium channel expressed predominantly in glial cells.</title>
        <authorList>
            <person name="Takumi T."/>
            <person name="Ishii T."/>
            <person name="Horio Y."/>
            <person name="Morishige K."/>
            <person name="Takahashi N."/>
            <person name="Yamada M."/>
            <person name="Yamashita T."/>
            <person name="Kiyama H."/>
            <person name="Sohmiya K."/>
            <person name="Nakanishi S."/>
            <person name="Kurachi Y."/>
        </authorList>
    </citation>
    <scope>NUCLEOTIDE SEQUENCE [MRNA]</scope>
    <scope>TISSUE SPECIFICITY</scope>
    <scope>FUNCTION</scope>
    <scope>TRANSPORTER ACTIVITY</scope>
    <scope>ACTIVITY REGULATION</scope>
    <source>
        <strain>Sprague-Dawley</strain>
        <tissue>Brain</tissue>
    </source>
</reference>
<reference key="2">
    <citation type="journal article" date="1994" name="Recept. Channels">
        <title>Cloning and expression of a family of inward rectifier potassium channels.</title>
        <authorList>
            <person name="Bond C.T."/>
            <person name="Pessia M."/>
            <person name="Xia X.-M."/>
            <person name="Lagrutta A."/>
            <person name="Kavanaugh M.P."/>
            <person name="Adelman J.P."/>
        </authorList>
    </citation>
    <scope>NUCLEOTIDE SEQUENCE [MRNA]</scope>
    <source>
        <strain>Sprague-Dawley</strain>
        <tissue>Brain</tissue>
    </source>
</reference>
<reference key="3">
    <citation type="journal article" date="1995" name="Proc. Natl. Acad. Sci. U.S.A.">
        <title>Cloning and expression of two brain-specific inwardly rectifying potassium channels.</title>
        <authorList>
            <person name="Bredt D.S."/>
            <person name="Wang T.L."/>
            <person name="Cohen N.A."/>
            <person name="Guggino W.B."/>
            <person name="Snyder S.H."/>
        </authorList>
    </citation>
    <scope>NUCLEOTIDE SEQUENCE [MRNA]</scope>
    <scope>TISSUE SPECIFICITY</scope>
    <source>
        <tissue>Brain</tissue>
    </source>
</reference>
<reference key="4">
    <citation type="journal article" date="2007" name="Channels">
        <title>Control of pH and PIP2 gating in heteromeric Kir4.1/Kir5.1 channels by H-Bonding at the helix-bundle crossing.</title>
        <authorList>
            <person name="Rapedius M."/>
            <person name="Paynter J.J."/>
            <person name="Fowler P.W."/>
            <person name="Shang L."/>
            <person name="Sansom M.S."/>
            <person name="Tucker S.J."/>
            <person name="Baukrowitz T."/>
        </authorList>
    </citation>
    <scope>ACTIVITY REGULATION</scope>
    <scope>MUTAGENESIS OF LYS-67</scope>
</reference>
<reference key="5">
    <citation type="journal article" date="2010" name="J. Biol. Chem.">
        <title>Molecular mechanisms of EAST/SeSAME syndrome mutations in Kir4.1 (KCNJ10).</title>
        <authorList>
            <person name="Sala-Rabanal M."/>
            <person name="Kucheryavykh L.Y."/>
            <person name="Skatchkov S.N."/>
            <person name="Eaton M.J."/>
            <person name="Nichols C.G."/>
        </authorList>
    </citation>
    <scope>TRANSPORTER ACTIVITY</scope>
    <scope>ACTIVITY REGULATION</scope>
    <scope>MUTAGENESIS OF ARG-65; GLY-77; CYS-140; THR-164; ALA-167; 199-ARG--VAL-379 AND ARG-297</scope>
</reference>
<reference key="6">
    <citation type="journal article" date="2024" name="Nat. Chem. Biol.">
        <title>Pharmacological inhibition of Kir4.1 evokes rapid-onset antidepressant responses.</title>
        <authorList>
            <person name="Zhou X."/>
            <person name="Zhao C."/>
            <person name="Xu H."/>
            <person name="Xu Y."/>
            <person name="Zhan L."/>
            <person name="Wang P."/>
            <person name="He J."/>
            <person name="Lu T."/>
            <person name="Gu Y."/>
            <person name="Yang Y."/>
            <person name="Xu C."/>
            <person name="Chen Y."/>
            <person name="Liu Y."/>
            <person name="Zeng Y."/>
            <person name="Tian F."/>
            <person name="Chen Q."/>
            <person name="Xie X."/>
            <person name="Liu J."/>
            <person name="Hu H."/>
            <person name="Li J."/>
            <person name="Zheng Y."/>
            <person name="Guo J."/>
            <person name="Gao Z."/>
        </authorList>
    </citation>
    <scope>STRUCTURE BY ELECTRON MICROSCOPY (2.85 ANGSTROMS) OF 22-357 IN COMPLEX WITH PTDINS(4,5)P2</scope>
    <scope>TOPOLOGY</scope>
    <scope>DISULFIDE BONDS</scope>
    <scope>SUBUNIT</scope>
</reference>
<keyword id="KW-0002">3D-structure</keyword>
<keyword id="KW-0067">ATP-binding</keyword>
<keyword id="KW-1003">Cell membrane</keyword>
<keyword id="KW-1015">Disulfide bond</keyword>
<keyword id="KW-0407">Ion channel</keyword>
<keyword id="KW-0406">Ion transport</keyword>
<keyword id="KW-0472">Membrane</keyword>
<keyword id="KW-0547">Nucleotide-binding</keyword>
<keyword id="KW-0630">Potassium</keyword>
<keyword id="KW-0633">Potassium transport</keyword>
<keyword id="KW-1185">Reference proteome</keyword>
<keyword id="KW-0812">Transmembrane</keyword>
<keyword id="KW-1133">Transmembrane helix</keyword>
<keyword id="KW-0813">Transport</keyword>
<keyword id="KW-0851">Voltage-gated channel</keyword>
<accession>P49655</accession>
<accession>Q62790</accession>
<proteinExistence type="evidence at protein level"/>
<name>KCJ10_RAT</name>
<gene>
    <name evidence="13" type="primary">Kcnj10</name>
    <name evidence="10" type="synonym">Kab-2</name>
</gene>
<dbReference type="EMBL" id="X86818">
    <property type="protein sequence ID" value="CAA60501.1"/>
    <property type="molecule type" value="mRNA"/>
</dbReference>
<dbReference type="EMBL" id="X83585">
    <property type="protein sequence ID" value="CAA58568.1"/>
    <property type="molecule type" value="mRNA"/>
</dbReference>
<dbReference type="EMBL" id="U27558">
    <property type="protein sequence ID" value="AAA87811.1"/>
    <property type="molecule type" value="mRNA"/>
</dbReference>
<dbReference type="PIR" id="A57477">
    <property type="entry name" value="A57477"/>
</dbReference>
<dbReference type="RefSeq" id="NP_113790.2">
    <property type="nucleotide sequence ID" value="NM_031602.2"/>
</dbReference>
<dbReference type="RefSeq" id="XP_008767959.1">
    <property type="nucleotide sequence ID" value="XM_008769737.2"/>
</dbReference>
<dbReference type="RefSeq" id="XP_017454263.1">
    <property type="nucleotide sequence ID" value="XM_017598774.1"/>
</dbReference>
<dbReference type="PDB" id="8I5M">
    <property type="method" value="EM"/>
    <property type="resolution" value="2.85 A"/>
    <property type="chains" value="A/B/C/D=22-357"/>
</dbReference>
<dbReference type="PDB" id="8I5N">
    <property type="method" value="EM"/>
    <property type="resolution" value="2.85 A"/>
    <property type="chains" value="A/B/C/D=22-357"/>
</dbReference>
<dbReference type="PDBsum" id="8I5M"/>
<dbReference type="PDBsum" id="8I5N"/>
<dbReference type="EMDB" id="EMD-35195"/>
<dbReference type="EMDB" id="EMD-35196"/>
<dbReference type="SMR" id="P49655"/>
<dbReference type="BioGRID" id="248335">
    <property type="interactions" value="2"/>
</dbReference>
<dbReference type="CORUM" id="P49655"/>
<dbReference type="FunCoup" id="P49655">
    <property type="interactions" value="428"/>
</dbReference>
<dbReference type="IntAct" id="P49655">
    <property type="interactions" value="3"/>
</dbReference>
<dbReference type="MINT" id="P49655"/>
<dbReference type="STRING" id="10116.ENSRNOP00000010146"/>
<dbReference type="GuidetoPHARMACOLOGY" id="438"/>
<dbReference type="iPTMnet" id="P49655"/>
<dbReference type="PhosphoSitePlus" id="P49655"/>
<dbReference type="PaxDb" id="10116-ENSRNOP00000010146"/>
<dbReference type="Ensembl" id="ENSRNOT00000119639.1">
    <property type="protein sequence ID" value="ENSRNOP00000086322.1"/>
    <property type="gene ID" value="ENSRNOG00000068444.1"/>
</dbReference>
<dbReference type="GeneID" id="29718"/>
<dbReference type="KEGG" id="rno:29718"/>
<dbReference type="UCSC" id="RGD:61822">
    <property type="organism name" value="rat"/>
</dbReference>
<dbReference type="AGR" id="RGD:61822"/>
<dbReference type="CTD" id="3766"/>
<dbReference type="RGD" id="61822">
    <property type="gene designation" value="Kcnj10"/>
</dbReference>
<dbReference type="eggNOG" id="KOG3827">
    <property type="taxonomic scope" value="Eukaryota"/>
</dbReference>
<dbReference type="GeneTree" id="ENSGT00990000203615"/>
<dbReference type="HOGENOM" id="CLU_022738_3_3_1"/>
<dbReference type="InParanoid" id="P49655"/>
<dbReference type="OrthoDB" id="273257at2759"/>
<dbReference type="PhylomeDB" id="P49655"/>
<dbReference type="TreeFam" id="TF313676"/>
<dbReference type="Reactome" id="R-RNO-1296041">
    <property type="pathway name" value="Activation of G protein gated Potassium channels"/>
</dbReference>
<dbReference type="Reactome" id="R-RNO-1296067">
    <property type="pathway name" value="Potassium transport channels"/>
</dbReference>
<dbReference type="Reactome" id="R-RNO-997272">
    <property type="pathway name" value="Inhibition of voltage gated Ca2+ channels via Gbeta/gamma subunits"/>
</dbReference>
<dbReference type="PRO" id="PR:P49655"/>
<dbReference type="Proteomes" id="UP000002494">
    <property type="component" value="Chromosome 13"/>
</dbReference>
<dbReference type="GO" id="GO:0016324">
    <property type="term" value="C:apical plasma membrane"/>
    <property type="evidence" value="ECO:0000314"/>
    <property type="project" value="RGD"/>
</dbReference>
<dbReference type="GO" id="GO:0097449">
    <property type="term" value="C:astrocyte projection"/>
    <property type="evidence" value="ECO:0000314"/>
    <property type="project" value="RGD"/>
</dbReference>
<dbReference type="GO" id="GO:0016323">
    <property type="term" value="C:basolateral plasma membrane"/>
    <property type="evidence" value="ECO:0000314"/>
    <property type="project" value="RGD"/>
</dbReference>
<dbReference type="GO" id="GO:0044297">
    <property type="term" value="C:cell body"/>
    <property type="evidence" value="ECO:0000266"/>
    <property type="project" value="RGD"/>
</dbReference>
<dbReference type="GO" id="GO:0097546">
    <property type="term" value="C:ciliary base"/>
    <property type="evidence" value="ECO:0000266"/>
    <property type="project" value="RGD"/>
</dbReference>
<dbReference type="GO" id="GO:0005902">
    <property type="term" value="C:microvillus"/>
    <property type="evidence" value="ECO:0000314"/>
    <property type="project" value="RGD"/>
</dbReference>
<dbReference type="GO" id="GO:0034702">
    <property type="term" value="C:monoatomic ion channel complex"/>
    <property type="evidence" value="ECO:0007669"/>
    <property type="project" value="UniProtKB-KW"/>
</dbReference>
<dbReference type="GO" id="GO:0005886">
    <property type="term" value="C:plasma membrane"/>
    <property type="evidence" value="ECO:0000266"/>
    <property type="project" value="RGD"/>
</dbReference>
<dbReference type="GO" id="GO:0098793">
    <property type="term" value="C:presynapse"/>
    <property type="evidence" value="ECO:0007669"/>
    <property type="project" value="GOC"/>
</dbReference>
<dbReference type="GO" id="GO:0005524">
    <property type="term" value="F:ATP binding"/>
    <property type="evidence" value="ECO:0007669"/>
    <property type="project" value="UniProtKB-KW"/>
</dbReference>
<dbReference type="GO" id="GO:0042802">
    <property type="term" value="F:identical protein binding"/>
    <property type="evidence" value="ECO:0000353"/>
    <property type="project" value="RGD"/>
</dbReference>
<dbReference type="GO" id="GO:0005242">
    <property type="term" value="F:inward rectifier potassium channel activity"/>
    <property type="evidence" value="ECO:0000266"/>
    <property type="project" value="RGD"/>
</dbReference>
<dbReference type="GO" id="GO:0005267">
    <property type="term" value="F:potassium channel activity"/>
    <property type="evidence" value="ECO:0000266"/>
    <property type="project" value="RGD"/>
</dbReference>
<dbReference type="GO" id="GO:0005102">
    <property type="term" value="F:signaling receptor binding"/>
    <property type="evidence" value="ECO:0000353"/>
    <property type="project" value="RGD"/>
</dbReference>
<dbReference type="GO" id="GO:0007628">
    <property type="term" value="P:adult walking behavior"/>
    <property type="evidence" value="ECO:0000266"/>
    <property type="project" value="RGD"/>
</dbReference>
<dbReference type="GO" id="GO:0035865">
    <property type="term" value="P:cellular response to potassium ion"/>
    <property type="evidence" value="ECO:0000266"/>
    <property type="project" value="RGD"/>
</dbReference>
<dbReference type="GO" id="GO:0022010">
    <property type="term" value="P:central nervous system myelination"/>
    <property type="evidence" value="ECO:0000266"/>
    <property type="project" value="RGD"/>
</dbReference>
<dbReference type="GO" id="GO:0051649">
    <property type="term" value="P:establishment of localization in cell"/>
    <property type="evidence" value="ECO:0000266"/>
    <property type="project" value="RGD"/>
</dbReference>
<dbReference type="GO" id="GO:0051935">
    <property type="term" value="P:glutamate reuptake"/>
    <property type="evidence" value="ECO:0000266"/>
    <property type="project" value="RGD"/>
</dbReference>
<dbReference type="GO" id="GO:0051938">
    <property type="term" value="P:L-glutamate import"/>
    <property type="evidence" value="ECO:0000315"/>
    <property type="project" value="RGD"/>
</dbReference>
<dbReference type="GO" id="GO:0060081">
    <property type="term" value="P:membrane hyperpolarization"/>
    <property type="evidence" value="ECO:0000315"/>
    <property type="project" value="RGD"/>
</dbReference>
<dbReference type="GO" id="GO:1905515">
    <property type="term" value="P:non-motile cilium assembly"/>
    <property type="evidence" value="ECO:0000266"/>
    <property type="project" value="RGD"/>
</dbReference>
<dbReference type="GO" id="GO:0014003">
    <property type="term" value="P:oligodendrocyte development"/>
    <property type="evidence" value="ECO:0000266"/>
    <property type="project" value="RGD"/>
</dbReference>
<dbReference type="GO" id="GO:0021554">
    <property type="term" value="P:optic nerve development"/>
    <property type="evidence" value="ECO:0000270"/>
    <property type="project" value="RGD"/>
</dbReference>
<dbReference type="GO" id="GO:0055075">
    <property type="term" value="P:potassium ion homeostasis"/>
    <property type="evidence" value="ECO:0000266"/>
    <property type="project" value="RGD"/>
</dbReference>
<dbReference type="GO" id="GO:1990573">
    <property type="term" value="P:potassium ion import across plasma membrane"/>
    <property type="evidence" value="ECO:0000315"/>
    <property type="project" value="RGD"/>
</dbReference>
<dbReference type="GO" id="GO:0071805">
    <property type="term" value="P:potassium ion transmembrane transport"/>
    <property type="evidence" value="ECO:0000266"/>
    <property type="project" value="RGD"/>
</dbReference>
<dbReference type="GO" id="GO:0006813">
    <property type="term" value="P:potassium ion transport"/>
    <property type="evidence" value="ECO:0000266"/>
    <property type="project" value="RGD"/>
</dbReference>
<dbReference type="GO" id="GO:0048169">
    <property type="term" value="P:regulation of long-term neuronal synaptic plasticity"/>
    <property type="evidence" value="ECO:0000266"/>
    <property type="project" value="RGD"/>
</dbReference>
<dbReference type="GO" id="GO:0042391">
    <property type="term" value="P:regulation of membrane potential"/>
    <property type="evidence" value="ECO:0000266"/>
    <property type="project" value="RGD"/>
</dbReference>
<dbReference type="GO" id="GO:0034765">
    <property type="term" value="P:regulation of monoatomic ion transmembrane transport"/>
    <property type="evidence" value="ECO:0000318"/>
    <property type="project" value="GO_Central"/>
</dbReference>
<dbReference type="GO" id="GO:0060075">
    <property type="term" value="P:regulation of resting membrane potential"/>
    <property type="evidence" value="ECO:0000266"/>
    <property type="project" value="RGD"/>
</dbReference>
<dbReference type="GO" id="GO:0009637">
    <property type="term" value="P:response to blue light"/>
    <property type="evidence" value="ECO:0000270"/>
    <property type="project" value="RGD"/>
</dbReference>
<dbReference type="GO" id="GO:0051384">
    <property type="term" value="P:response to glucocorticoid"/>
    <property type="evidence" value="ECO:0000270"/>
    <property type="project" value="RGD"/>
</dbReference>
<dbReference type="GO" id="GO:0051385">
    <property type="term" value="P:response to mineralocorticoid"/>
    <property type="evidence" value="ECO:0000270"/>
    <property type="project" value="RGD"/>
</dbReference>
<dbReference type="GO" id="GO:0007601">
    <property type="term" value="P:visual perception"/>
    <property type="evidence" value="ECO:0000266"/>
    <property type="project" value="RGD"/>
</dbReference>
<dbReference type="FunFam" id="1.10.287.70:FF:000036">
    <property type="entry name" value="ATP-sensitive inward rectifier potassium channel 1"/>
    <property type="match status" value="1"/>
</dbReference>
<dbReference type="FunFam" id="2.60.40.1400:FF:000002">
    <property type="entry name" value="ATP-sensitive inward rectifier potassium channel 1"/>
    <property type="match status" value="1"/>
</dbReference>
<dbReference type="Gene3D" id="1.10.287.70">
    <property type="match status" value="1"/>
</dbReference>
<dbReference type="Gene3D" id="2.60.40.1400">
    <property type="entry name" value="G protein-activated inward rectifier potassium channel 1"/>
    <property type="match status" value="1"/>
</dbReference>
<dbReference type="InterPro" id="IPR014756">
    <property type="entry name" value="Ig_E-set"/>
</dbReference>
<dbReference type="InterPro" id="IPR041647">
    <property type="entry name" value="IRK_C"/>
</dbReference>
<dbReference type="InterPro" id="IPR016449">
    <property type="entry name" value="K_chnl_inward-rec_Kir"/>
</dbReference>
<dbReference type="InterPro" id="IPR003269">
    <property type="entry name" value="K_chnl_inward-rec_Kir1.2"/>
</dbReference>
<dbReference type="InterPro" id="IPR013518">
    <property type="entry name" value="K_chnl_inward-rec_Kir_cyto"/>
</dbReference>
<dbReference type="InterPro" id="IPR040445">
    <property type="entry name" value="Kir_TM"/>
</dbReference>
<dbReference type="PANTHER" id="PTHR11767:SF21">
    <property type="entry name" value="ATP-SENSITIVE INWARD RECTIFIER POTASSIUM CHANNEL 10"/>
    <property type="match status" value="1"/>
</dbReference>
<dbReference type="PANTHER" id="PTHR11767">
    <property type="entry name" value="INWARD RECTIFIER POTASSIUM CHANNEL"/>
    <property type="match status" value="1"/>
</dbReference>
<dbReference type="Pfam" id="PF01007">
    <property type="entry name" value="IRK"/>
    <property type="match status" value="1"/>
</dbReference>
<dbReference type="Pfam" id="PF17655">
    <property type="entry name" value="IRK_C"/>
    <property type="match status" value="1"/>
</dbReference>
<dbReference type="PIRSF" id="PIRSF005465">
    <property type="entry name" value="GIRK_kir"/>
    <property type="match status" value="1"/>
</dbReference>
<dbReference type="PRINTS" id="PR01322">
    <property type="entry name" value="KIR12CHANNEL"/>
</dbReference>
<dbReference type="PRINTS" id="PR01320">
    <property type="entry name" value="KIRCHANNEL"/>
</dbReference>
<dbReference type="SUPFAM" id="SSF81296">
    <property type="entry name" value="E set domains"/>
    <property type="match status" value="1"/>
</dbReference>
<dbReference type="SUPFAM" id="SSF81324">
    <property type="entry name" value="Voltage-gated potassium channels"/>
    <property type="match status" value="1"/>
</dbReference>
<sequence>MTSVAKVYYSQTTQTESRPLVAPGIRRRRVLTKDGRSNVRMEHIADKRFLYLKDLWTTFIDMQWRYKLLLFSATFAGTWFLFGVVWYLVAVAHGDLLELGPPANHTPCVVQVHTLTGAFLFSLESQTTIGYGFRYISEECPLAIVLLIAQLVLTTILEIFITGTFLAKIARPKKRAETIRFSQHAVVAYHNGKLCLMIRVANMRKSLLIGCQVTGKLLQTHQTKEGENIRLNQVNVTFQVDTASDSPFLILPLTFYHVVDETSPLKDLPLRSGEGDFELVLILSGTVESTSATCQVRTSYLPEEILWGYEFTPAISLSASGKYVADFSLFDQVVKVASPGGLRDSTVRYGDPEKLKLEESLREQAEKEGSALSVRISNV</sequence>
<feature type="chain" id="PRO_0000154955" description="ATP-sensitive inward rectifier potassium channel 10">
    <location>
        <begin position="1"/>
        <end position="379"/>
    </location>
</feature>
<feature type="topological domain" description="Cytoplasmic" evidence="12 14">
    <location>
        <begin position="1"/>
        <end position="61"/>
    </location>
</feature>
<feature type="transmembrane region" description="Helical; Name=M1" evidence="7 14">
    <location>
        <begin position="62"/>
        <end position="88"/>
    </location>
</feature>
<feature type="topological domain" description="Extracellular" evidence="12 14">
    <location>
        <begin position="89"/>
        <end position="114"/>
    </location>
</feature>
<feature type="intramembrane region" description="Discontinuously helical; Pore-forming" evidence="7 14">
    <location>
        <begin position="115"/>
        <end position="131"/>
    </location>
</feature>
<feature type="topological domain" description="Extracellular" evidence="12 14">
    <location>
        <begin position="132"/>
        <end position="140"/>
    </location>
</feature>
<feature type="transmembrane region" description="Helical; Name=M2" evidence="7 14">
    <location>
        <begin position="141"/>
        <end position="166"/>
    </location>
</feature>
<feature type="topological domain" description="Cytoplasmic" evidence="12 14">
    <location>
        <begin position="167"/>
        <end position="379"/>
    </location>
</feature>
<feature type="short sequence motif" description="Selectivity filter" evidence="1">
    <location>
        <begin position="128"/>
        <end position="133"/>
    </location>
</feature>
<feature type="binding site" evidence="7 14">
    <location>
        <position position="36"/>
    </location>
    <ligand>
        <name>1,2-dioctanoyl-sn-glycero-3-phospho-(1D-myo-inositol-4,5-bisphosphate)</name>
        <dbReference type="ChEBI" id="CHEBI:83419"/>
    </ligand>
</feature>
<feature type="binding site" evidence="7 14">
    <location>
        <position position="168"/>
    </location>
    <ligand>
        <name>1,2-dioctanoyl-sn-glycero-3-phospho-(1D-myo-inositol-4,5-bisphosphate)</name>
        <dbReference type="ChEBI" id="CHEBI:83419"/>
    </ligand>
</feature>
<feature type="binding site" evidence="7 14">
    <location>
        <position position="171"/>
    </location>
    <ligand>
        <name>1,2-dioctanoyl-sn-glycero-3-phospho-(1D-myo-inositol-4,5-bisphosphate)</name>
        <dbReference type="ChEBI" id="CHEBI:83419"/>
    </ligand>
</feature>
<feature type="binding site" evidence="7 14">
    <location>
        <position position="173"/>
    </location>
    <ligand>
        <name>1,2-dioctanoyl-sn-glycero-3-phospho-(1D-myo-inositol-4,5-bisphosphate)</name>
        <dbReference type="ChEBI" id="CHEBI:83419"/>
    </ligand>
</feature>
<feature type="binding site" evidence="4">
    <location>
        <begin position="210"/>
        <end position="217"/>
    </location>
    <ligand>
        <name>ATP</name>
        <dbReference type="ChEBI" id="CHEBI:30616"/>
    </ligand>
</feature>
<feature type="site" description="Role in the control of polyamine-mediated channel gating and in the blocking by intracellular magnesium" evidence="1">
    <location>
        <position position="158"/>
    </location>
</feature>
<feature type="disulfide bond" evidence="7 14">
    <location>
        <begin position="108"/>
        <end position="140"/>
    </location>
</feature>
<feature type="mutagenesis site" description="Decreased potassium ion transport. Results in a shift to a more alkaline pH for channel activation." evidence="6">
    <original>R</original>
    <variation>P</variation>
    <location>
        <position position="65"/>
    </location>
</feature>
<feature type="mutagenesis site" description="Increased activation rate by PtdIns(4,5)P2." evidence="5">
    <original>K</original>
    <variation>M</variation>
    <location>
        <position position="67"/>
    </location>
</feature>
<feature type="mutagenesis site" description="Loss of potassium ion transport." evidence="6">
    <original>G</original>
    <variation>R</variation>
    <location>
        <position position="77"/>
    </location>
</feature>
<feature type="mutagenesis site" description="Loss of potassium ion transport." evidence="6">
    <original>C</original>
    <variation>R</variation>
    <location>
        <position position="140"/>
    </location>
</feature>
<feature type="mutagenesis site" description="Decreased potassium ion transport. Results in a shift to a more alkaline pH for channel activation." evidence="6">
    <original>T</original>
    <variation>I</variation>
    <location>
        <position position="164"/>
    </location>
</feature>
<feature type="mutagenesis site" description="Decreased potassium ion transport." evidence="6">
    <original>A</original>
    <variation>V</variation>
    <location>
        <position position="167"/>
    </location>
</feature>
<feature type="mutagenesis site" description="Loss of potassium ion transport." evidence="6">
    <location>
        <begin position="199"/>
        <end position="379"/>
    </location>
</feature>
<feature type="mutagenesis site" description="Loss of potassium ion transport. Results in a shift to a more alkaline pH for channel activation." evidence="6">
    <original>R</original>
    <variation>C</variation>
    <location>
        <position position="297"/>
    </location>
</feature>
<feature type="sequence conflict" description="In Ref. 3; AAA87811." evidence="11" ref="3">
    <original>A</original>
    <variation>P</variation>
    <location>
        <position position="73"/>
    </location>
</feature>
<feature type="sequence conflict" description="In Ref. 3; AAA87811." evidence="11" ref="3">
    <original>A</original>
    <variation>T</variation>
    <location>
        <position position="76"/>
    </location>
</feature>
<feature type="sequence conflict" description="In Ref. 3." evidence="11" ref="3">
    <original>VQV</original>
    <variation>GAGA</variation>
    <location>
        <begin position="110"/>
        <end position="112"/>
    </location>
</feature>
<feature type="sequence conflict" description="In Ref. 3." evidence="11" ref="3">
    <original>LT</original>
    <variation>YL</variation>
    <location>
        <begin position="115"/>
        <end position="116"/>
    </location>
</feature>
<feature type="sequence conflict" description="In Ref. 3; AAA87811." evidence="11" ref="3">
    <original>V</original>
    <variation>E</variation>
    <location>
        <position position="145"/>
    </location>
</feature>
<feature type="sequence conflict" description="In Ref. 3; AAA87811." evidence="11" ref="3">
    <original>H</original>
    <variation>L</variation>
    <location>
        <position position="190"/>
    </location>
</feature>
<feature type="sequence conflict" description="In Ref. 3; AAA87811." evidence="11" ref="3">
    <original>N</original>
    <variation>D</variation>
    <location>
        <position position="228"/>
    </location>
</feature>
<feature type="sequence conflict" description="In Ref. 3; AAA87811." evidence="11" ref="3">
    <original>K</original>
    <variation>Q</variation>
    <location>
        <position position="266"/>
    </location>
</feature>
<feature type="sequence conflict" description="In Ref. 2; CAA58568." evidence="11" ref="2">
    <original>E</original>
    <variation>R</variation>
    <location>
        <position position="304"/>
    </location>
</feature>
<feature type="strand" evidence="15">
    <location>
        <begin position="39"/>
        <end position="42"/>
    </location>
</feature>
<feature type="helix" evidence="15">
    <location>
        <begin position="47"/>
        <end position="53"/>
    </location>
</feature>
<feature type="helix" evidence="15">
    <location>
        <begin position="55"/>
        <end position="61"/>
    </location>
</feature>
<feature type="helix" evidence="15">
    <location>
        <begin position="64"/>
        <end position="92"/>
    </location>
</feature>
<feature type="helix" evidence="15">
    <location>
        <begin position="115"/>
        <end position="126"/>
    </location>
</feature>
<feature type="strand" evidence="15">
    <location>
        <begin position="132"/>
        <end position="134"/>
    </location>
</feature>
<feature type="helix" evidence="15">
    <location>
        <begin position="141"/>
        <end position="170"/>
    </location>
</feature>
<feature type="helix" evidence="15">
    <location>
        <begin position="173"/>
        <end position="178"/>
    </location>
</feature>
<feature type="strand" evidence="15">
    <location>
        <begin position="179"/>
        <end position="181"/>
    </location>
</feature>
<feature type="strand" evidence="15">
    <location>
        <begin position="186"/>
        <end position="190"/>
    </location>
</feature>
<feature type="strand" evidence="15">
    <location>
        <begin position="193"/>
        <end position="202"/>
    </location>
</feature>
<feature type="strand" evidence="15">
    <location>
        <begin position="204"/>
        <end position="206"/>
    </location>
</feature>
<feature type="strand" evidence="15">
    <location>
        <begin position="208"/>
        <end position="219"/>
    </location>
</feature>
<feature type="strand" evidence="15">
    <location>
        <begin position="224"/>
        <end position="227"/>
    </location>
</feature>
<feature type="strand" evidence="15">
    <location>
        <begin position="233"/>
        <end position="237"/>
    </location>
</feature>
<feature type="strand" evidence="15">
    <location>
        <begin position="239"/>
        <end position="244"/>
    </location>
</feature>
<feature type="strand" evidence="15">
    <location>
        <begin position="246"/>
        <end position="248"/>
    </location>
</feature>
<feature type="strand" evidence="15">
    <location>
        <begin position="253"/>
        <end position="258"/>
    </location>
</feature>
<feature type="turn" evidence="15">
    <location>
        <begin position="264"/>
        <end position="267"/>
    </location>
</feature>
<feature type="strand" evidence="16">
    <location>
        <begin position="271"/>
        <end position="273"/>
    </location>
</feature>
<feature type="strand" evidence="15">
    <location>
        <begin position="277"/>
        <end position="287"/>
    </location>
</feature>
<feature type="turn" evidence="15">
    <location>
        <begin position="288"/>
        <end position="290"/>
    </location>
</feature>
<feature type="strand" evidence="15">
    <location>
        <begin position="293"/>
        <end position="300"/>
    </location>
</feature>
<feature type="turn" evidence="15">
    <location>
        <begin position="302"/>
        <end position="304"/>
    </location>
</feature>
<feature type="strand" evidence="15">
    <location>
        <begin position="306"/>
        <end position="311"/>
    </location>
</feature>
<feature type="strand" evidence="16">
    <location>
        <begin position="315"/>
        <end position="317"/>
    </location>
</feature>
<feature type="strand" evidence="15">
    <location>
        <begin position="321"/>
        <end position="326"/>
    </location>
</feature>
<feature type="helix" evidence="15">
    <location>
        <begin position="327"/>
        <end position="329"/>
    </location>
</feature>
<feature type="strand" evidence="15">
    <location>
        <begin position="333"/>
        <end position="335"/>
    </location>
</feature>
<protein>
    <recommendedName>
        <fullName>ATP-sensitive inward rectifier potassium channel 10</fullName>
    </recommendedName>
    <alternativeName>
        <fullName evidence="10">ATP-sensitive inward rectifier potassium channel KAB-2</fullName>
    </alternativeName>
    <alternativeName>
        <fullName>BIR10</fullName>
    </alternativeName>
    <alternativeName>
        <fullName>Brain-specific inwardly rectifying K(+) channel 1</fullName>
        <shortName>BIRK1</shortName>
    </alternativeName>
    <alternativeName>
        <fullName>Inward rectifier K(+) channel Kir4.1</fullName>
    </alternativeName>
    <alternativeName>
        <fullName>Potassium channel, inwardly rectifying subfamily J member 10</fullName>
    </alternativeName>
</protein>
<evidence type="ECO:0000250" key="1"/>
<evidence type="ECO:0000250" key="2">
    <source>
        <dbReference type="UniProtKB" id="P78508"/>
    </source>
</evidence>
<evidence type="ECO:0000250" key="3">
    <source>
        <dbReference type="UniProtKB" id="Q9JM63"/>
    </source>
</evidence>
<evidence type="ECO:0000255" key="4"/>
<evidence type="ECO:0000269" key="5">
    <source>
    </source>
</evidence>
<evidence type="ECO:0000269" key="6">
    <source>
    </source>
</evidence>
<evidence type="ECO:0000269" key="7">
    <source>
    </source>
</evidence>
<evidence type="ECO:0000269" key="8">
    <source>
    </source>
</evidence>
<evidence type="ECO:0000269" key="9">
    <source>
    </source>
</evidence>
<evidence type="ECO:0000303" key="10">
    <source>
    </source>
</evidence>
<evidence type="ECO:0000305" key="11"/>
<evidence type="ECO:0000305" key="12">
    <source>
    </source>
</evidence>
<evidence type="ECO:0000312" key="13">
    <source>
        <dbReference type="RGD" id="61822"/>
    </source>
</evidence>
<evidence type="ECO:0007744" key="14">
    <source>
        <dbReference type="PDB" id="8I5M"/>
    </source>
</evidence>
<evidence type="ECO:0007829" key="15">
    <source>
        <dbReference type="PDB" id="8I5M"/>
    </source>
</evidence>
<evidence type="ECO:0007829" key="16">
    <source>
        <dbReference type="PDB" id="8I5N"/>
    </source>
</evidence>
<organism>
    <name type="scientific">Rattus norvegicus</name>
    <name type="common">Rat</name>
    <dbReference type="NCBI Taxonomy" id="10116"/>
    <lineage>
        <taxon>Eukaryota</taxon>
        <taxon>Metazoa</taxon>
        <taxon>Chordata</taxon>
        <taxon>Craniata</taxon>
        <taxon>Vertebrata</taxon>
        <taxon>Euteleostomi</taxon>
        <taxon>Mammalia</taxon>
        <taxon>Eutheria</taxon>
        <taxon>Euarchontoglires</taxon>
        <taxon>Glires</taxon>
        <taxon>Rodentia</taxon>
        <taxon>Myomorpha</taxon>
        <taxon>Muroidea</taxon>
        <taxon>Muridae</taxon>
        <taxon>Murinae</taxon>
        <taxon>Rattus</taxon>
    </lineage>
</organism>